<reference key="1">
    <citation type="journal article" date="2004" name="Nat. Biotechnol.">
        <title>Complete genome sequence of the metabolically versatile photosynthetic bacterium Rhodopseudomonas palustris.</title>
        <authorList>
            <person name="Larimer F.W."/>
            <person name="Chain P."/>
            <person name="Hauser L."/>
            <person name="Lamerdin J.E."/>
            <person name="Malfatti S."/>
            <person name="Do L."/>
            <person name="Land M.L."/>
            <person name="Pelletier D.A."/>
            <person name="Beatty J.T."/>
            <person name="Lang A.S."/>
            <person name="Tabita F.R."/>
            <person name="Gibson J.L."/>
            <person name="Hanson T.E."/>
            <person name="Bobst C."/>
            <person name="Torres y Torres J.L."/>
            <person name="Peres C."/>
            <person name="Harrison F.H."/>
            <person name="Gibson J."/>
            <person name="Harwood C.S."/>
        </authorList>
    </citation>
    <scope>NUCLEOTIDE SEQUENCE [LARGE SCALE GENOMIC DNA]</scope>
    <source>
        <strain>ATCC BAA-98 / CGA009</strain>
    </source>
</reference>
<sequence length="500" mass="52289">MPDAVKVGFVLFATPARGTLIVFCDDGLKFGATATKALGAAVATVKRAAATAQFKGKSGSALDLLAPEGLKVGRLIVVGAGKAASINDYDLLKLGGAVAGKIGAGDTAVTVVADLPTGAMKPEQAAAIASGIRLRAYKFDRYKTKKKDDENGAANASVTLAVADPAAAKKAFTPDSHVVDGVILARELVNEPPNVLYPEEFAKRAAQLKKLGVEVQILDVKAMTQLKMGALLGVSQGSAHPGRTVIMRWNGGKKGEQPLAFVGKGVCFDTGGISIKPSASMEDMKGDMGGAACVVGLMHALAARKAKVNAVGAIGLVENMPDGNAQRPGDIVTSMSGQTIEIINTDAEGRLVLADVLWYVAQKHKPKFMVDLATLTGAIMVALGTEYAGLFSNNDQLAERLAAVGQSTGEKVWRMPLGPEYDKQIDSQFADMKNTGSRNGGSITAAQFLQRFVDGTPWAHLDIAGTAMASPKNEINQSWGSGYGVRLLNQLVAEYYEAKK</sequence>
<comment type="function">
    <text evidence="1">Presumably involved in the processing and regular turnover of intracellular proteins. Catalyzes the removal of unsubstituted N-terminal amino acids from various peptides.</text>
</comment>
<comment type="catalytic activity">
    <reaction evidence="1">
        <text>Release of an N-terminal amino acid, Xaa-|-Yaa-, in which Xaa is preferably Leu, but may be other amino acids including Pro although not Arg or Lys, and Yaa may be Pro. Amino acid amides and methyl esters are also readily hydrolyzed, but rates on arylamides are exceedingly low.</text>
        <dbReference type="EC" id="3.4.11.1"/>
    </reaction>
</comment>
<comment type="catalytic activity">
    <reaction evidence="1">
        <text>Release of an N-terminal amino acid, preferentially leucine, but not glutamic or aspartic acids.</text>
        <dbReference type="EC" id="3.4.11.10"/>
    </reaction>
</comment>
<comment type="cofactor">
    <cofactor evidence="1">
        <name>Mn(2+)</name>
        <dbReference type="ChEBI" id="CHEBI:29035"/>
    </cofactor>
    <text evidence="1">Binds 2 manganese ions per subunit.</text>
</comment>
<comment type="subcellular location">
    <subcellularLocation>
        <location evidence="1">Cytoplasm</location>
    </subcellularLocation>
</comment>
<comment type="similarity">
    <text evidence="1">Belongs to the peptidase M17 family.</text>
</comment>
<evidence type="ECO:0000255" key="1">
    <source>
        <dbReference type="HAMAP-Rule" id="MF_00181"/>
    </source>
</evidence>
<gene>
    <name evidence="1" type="primary">pepA</name>
    <name type="ordered locus">RPA3060</name>
</gene>
<dbReference type="EC" id="3.4.11.1" evidence="1"/>
<dbReference type="EC" id="3.4.11.10" evidence="1"/>
<dbReference type="EMBL" id="BX572602">
    <property type="protein sequence ID" value="CAE28501.1"/>
    <property type="molecule type" value="Genomic_DNA"/>
</dbReference>
<dbReference type="RefSeq" id="WP_011158606.1">
    <property type="nucleotide sequence ID" value="NZ_CP116810.1"/>
</dbReference>
<dbReference type="SMR" id="Q6N5B9"/>
<dbReference type="STRING" id="258594.RPA3060"/>
<dbReference type="GeneID" id="66894142"/>
<dbReference type="eggNOG" id="COG0260">
    <property type="taxonomic scope" value="Bacteria"/>
</dbReference>
<dbReference type="HOGENOM" id="CLU_013734_6_0_5"/>
<dbReference type="PhylomeDB" id="Q6N5B9"/>
<dbReference type="GO" id="GO:0005737">
    <property type="term" value="C:cytoplasm"/>
    <property type="evidence" value="ECO:0007669"/>
    <property type="project" value="UniProtKB-SubCell"/>
</dbReference>
<dbReference type="GO" id="GO:0030145">
    <property type="term" value="F:manganese ion binding"/>
    <property type="evidence" value="ECO:0007669"/>
    <property type="project" value="UniProtKB-UniRule"/>
</dbReference>
<dbReference type="GO" id="GO:0070006">
    <property type="term" value="F:metalloaminopeptidase activity"/>
    <property type="evidence" value="ECO:0007669"/>
    <property type="project" value="InterPro"/>
</dbReference>
<dbReference type="GO" id="GO:0006508">
    <property type="term" value="P:proteolysis"/>
    <property type="evidence" value="ECO:0007669"/>
    <property type="project" value="UniProtKB-KW"/>
</dbReference>
<dbReference type="CDD" id="cd00433">
    <property type="entry name" value="Peptidase_M17"/>
    <property type="match status" value="1"/>
</dbReference>
<dbReference type="Gene3D" id="3.40.220.10">
    <property type="entry name" value="Leucine Aminopeptidase, subunit E, domain 1"/>
    <property type="match status" value="1"/>
</dbReference>
<dbReference type="Gene3D" id="3.40.630.10">
    <property type="entry name" value="Zn peptidases"/>
    <property type="match status" value="1"/>
</dbReference>
<dbReference type="HAMAP" id="MF_00181">
    <property type="entry name" value="Cytosol_peptidase_M17"/>
    <property type="match status" value="1"/>
</dbReference>
<dbReference type="InterPro" id="IPR011356">
    <property type="entry name" value="Leucine_aapep/pepB"/>
</dbReference>
<dbReference type="InterPro" id="IPR043472">
    <property type="entry name" value="Macro_dom-like"/>
</dbReference>
<dbReference type="InterPro" id="IPR000819">
    <property type="entry name" value="Peptidase_M17_C"/>
</dbReference>
<dbReference type="InterPro" id="IPR023042">
    <property type="entry name" value="Peptidase_M17_leu_NH2_pept"/>
</dbReference>
<dbReference type="InterPro" id="IPR008283">
    <property type="entry name" value="Peptidase_M17_N"/>
</dbReference>
<dbReference type="NCBIfam" id="NF002073">
    <property type="entry name" value="PRK00913.1-2"/>
    <property type="match status" value="1"/>
</dbReference>
<dbReference type="NCBIfam" id="NF002074">
    <property type="entry name" value="PRK00913.1-4"/>
    <property type="match status" value="1"/>
</dbReference>
<dbReference type="NCBIfam" id="NF002075">
    <property type="entry name" value="PRK00913.2-2"/>
    <property type="match status" value="1"/>
</dbReference>
<dbReference type="NCBIfam" id="NF002077">
    <property type="entry name" value="PRK00913.2-4"/>
    <property type="match status" value="1"/>
</dbReference>
<dbReference type="NCBIfam" id="NF002083">
    <property type="entry name" value="PRK00913.3-5"/>
    <property type="match status" value="1"/>
</dbReference>
<dbReference type="PANTHER" id="PTHR11963:SF23">
    <property type="entry name" value="CYTOSOL AMINOPEPTIDASE"/>
    <property type="match status" value="1"/>
</dbReference>
<dbReference type="PANTHER" id="PTHR11963">
    <property type="entry name" value="LEUCINE AMINOPEPTIDASE-RELATED"/>
    <property type="match status" value="1"/>
</dbReference>
<dbReference type="Pfam" id="PF00883">
    <property type="entry name" value="Peptidase_M17"/>
    <property type="match status" value="1"/>
</dbReference>
<dbReference type="Pfam" id="PF02789">
    <property type="entry name" value="Peptidase_M17_N"/>
    <property type="match status" value="1"/>
</dbReference>
<dbReference type="PRINTS" id="PR00481">
    <property type="entry name" value="LAMNOPPTDASE"/>
</dbReference>
<dbReference type="SUPFAM" id="SSF52949">
    <property type="entry name" value="Macro domain-like"/>
    <property type="match status" value="1"/>
</dbReference>
<dbReference type="SUPFAM" id="SSF53187">
    <property type="entry name" value="Zn-dependent exopeptidases"/>
    <property type="match status" value="1"/>
</dbReference>
<dbReference type="PROSITE" id="PS00631">
    <property type="entry name" value="CYTOSOL_AP"/>
    <property type="match status" value="1"/>
</dbReference>
<name>AMPA_RHOPA</name>
<proteinExistence type="inferred from homology"/>
<accession>Q6N5B9</accession>
<keyword id="KW-0031">Aminopeptidase</keyword>
<keyword id="KW-0963">Cytoplasm</keyword>
<keyword id="KW-0378">Hydrolase</keyword>
<keyword id="KW-0464">Manganese</keyword>
<keyword id="KW-0479">Metal-binding</keyword>
<keyword id="KW-0645">Protease</keyword>
<organism>
    <name type="scientific">Rhodopseudomonas palustris (strain ATCC BAA-98 / CGA009)</name>
    <dbReference type="NCBI Taxonomy" id="258594"/>
    <lineage>
        <taxon>Bacteria</taxon>
        <taxon>Pseudomonadati</taxon>
        <taxon>Pseudomonadota</taxon>
        <taxon>Alphaproteobacteria</taxon>
        <taxon>Hyphomicrobiales</taxon>
        <taxon>Nitrobacteraceae</taxon>
        <taxon>Rhodopseudomonas</taxon>
    </lineage>
</organism>
<feature type="chain" id="PRO_0000165790" description="Probable cytosol aminopeptidase">
    <location>
        <begin position="1"/>
        <end position="500"/>
    </location>
</feature>
<feature type="active site" evidence="1">
    <location>
        <position position="276"/>
    </location>
</feature>
<feature type="active site" evidence="1">
    <location>
        <position position="350"/>
    </location>
</feature>
<feature type="binding site" evidence="1">
    <location>
        <position position="264"/>
    </location>
    <ligand>
        <name>Mn(2+)</name>
        <dbReference type="ChEBI" id="CHEBI:29035"/>
        <label>2</label>
    </ligand>
</feature>
<feature type="binding site" evidence="1">
    <location>
        <position position="269"/>
    </location>
    <ligand>
        <name>Mn(2+)</name>
        <dbReference type="ChEBI" id="CHEBI:29035"/>
        <label>1</label>
    </ligand>
</feature>
<feature type="binding site" evidence="1">
    <location>
        <position position="269"/>
    </location>
    <ligand>
        <name>Mn(2+)</name>
        <dbReference type="ChEBI" id="CHEBI:29035"/>
        <label>2</label>
    </ligand>
</feature>
<feature type="binding site" evidence="1">
    <location>
        <position position="287"/>
    </location>
    <ligand>
        <name>Mn(2+)</name>
        <dbReference type="ChEBI" id="CHEBI:29035"/>
        <label>2</label>
    </ligand>
</feature>
<feature type="binding site" evidence="1">
    <location>
        <position position="346"/>
    </location>
    <ligand>
        <name>Mn(2+)</name>
        <dbReference type="ChEBI" id="CHEBI:29035"/>
        <label>1</label>
    </ligand>
</feature>
<feature type="binding site" evidence="1">
    <location>
        <position position="348"/>
    </location>
    <ligand>
        <name>Mn(2+)</name>
        <dbReference type="ChEBI" id="CHEBI:29035"/>
        <label>1</label>
    </ligand>
</feature>
<feature type="binding site" evidence="1">
    <location>
        <position position="348"/>
    </location>
    <ligand>
        <name>Mn(2+)</name>
        <dbReference type="ChEBI" id="CHEBI:29035"/>
        <label>2</label>
    </ligand>
</feature>
<protein>
    <recommendedName>
        <fullName evidence="1">Probable cytosol aminopeptidase</fullName>
        <ecNumber evidence="1">3.4.11.1</ecNumber>
    </recommendedName>
    <alternativeName>
        <fullName evidence="1">Leucine aminopeptidase</fullName>
        <shortName evidence="1">LAP</shortName>
        <ecNumber evidence="1">3.4.11.10</ecNumber>
    </alternativeName>
    <alternativeName>
        <fullName evidence="1">Leucyl aminopeptidase</fullName>
    </alternativeName>
</protein>